<proteinExistence type="inferred from homology"/>
<geneLocation type="mitochondrion"/>
<feature type="chain" id="PRO_0000117583" description="NADH-ubiquinone oxidoreductase chain 2">
    <location>
        <begin position="1" status="less than"/>
        <end position="274"/>
    </location>
</feature>
<feature type="transmembrane region" description="Helical" evidence="2">
    <location>
        <begin position="28"/>
        <end position="48"/>
    </location>
</feature>
<feature type="transmembrane region" description="Helical" evidence="2">
    <location>
        <begin position="54"/>
        <end position="74"/>
    </location>
</feature>
<feature type="transmembrane region" description="Helical" evidence="2">
    <location>
        <begin position="79"/>
        <end position="99"/>
    </location>
</feature>
<feature type="transmembrane region" description="Helical" evidence="2">
    <location>
        <begin position="107"/>
        <end position="127"/>
    </location>
</feature>
<feature type="transmembrane region" description="Helical" evidence="2">
    <location>
        <begin position="128"/>
        <end position="148"/>
    </location>
</feature>
<feature type="transmembrane region" description="Helical" evidence="2">
    <location>
        <begin position="171"/>
        <end position="191"/>
    </location>
</feature>
<feature type="transmembrane region" description="Helical" evidence="2">
    <location>
        <begin position="206"/>
        <end position="226"/>
    </location>
</feature>
<feature type="transmembrane region" description="Helical" evidence="2">
    <location>
        <begin position="254"/>
        <end position="274"/>
    </location>
</feature>
<feature type="non-terminal residue">
    <location>
        <position position="1"/>
    </location>
</feature>
<gene>
    <name type="primary">mt:ND2</name>
    <name type="synonym">ND2</name>
</gene>
<accession>P29869</accession>
<keyword id="KW-0249">Electron transport</keyword>
<keyword id="KW-0472">Membrane</keyword>
<keyword id="KW-0496">Mitochondrion</keyword>
<keyword id="KW-0999">Mitochondrion inner membrane</keyword>
<keyword id="KW-0520">NAD</keyword>
<keyword id="KW-0679">Respiratory chain</keyword>
<keyword id="KW-1278">Translocase</keyword>
<keyword id="KW-0812">Transmembrane</keyword>
<keyword id="KW-1133">Transmembrane helix</keyword>
<keyword id="KW-0813">Transport</keyword>
<keyword id="KW-0830">Ubiquinone</keyword>
<dbReference type="EC" id="7.1.1.2"/>
<dbReference type="EMBL" id="M57909">
    <property type="protein sequence ID" value="AAB02283.1"/>
    <property type="molecule type" value="Genomic_DNA"/>
</dbReference>
<dbReference type="SMR" id="P29869"/>
<dbReference type="GO" id="GO:0005743">
    <property type="term" value="C:mitochondrial inner membrane"/>
    <property type="evidence" value="ECO:0007669"/>
    <property type="project" value="UniProtKB-SubCell"/>
</dbReference>
<dbReference type="GO" id="GO:0008137">
    <property type="term" value="F:NADH dehydrogenase (ubiquinone) activity"/>
    <property type="evidence" value="ECO:0007669"/>
    <property type="project" value="UniProtKB-EC"/>
</dbReference>
<dbReference type="GO" id="GO:0006120">
    <property type="term" value="P:mitochondrial electron transport, NADH to ubiquinone"/>
    <property type="evidence" value="ECO:0007669"/>
    <property type="project" value="InterPro"/>
</dbReference>
<dbReference type="InterPro" id="IPR050175">
    <property type="entry name" value="Complex_I_Subunit_2"/>
</dbReference>
<dbReference type="InterPro" id="IPR010933">
    <property type="entry name" value="NADH_DH_su2_C"/>
</dbReference>
<dbReference type="InterPro" id="IPR003917">
    <property type="entry name" value="NADH_UbQ_OxRdtase_chain2"/>
</dbReference>
<dbReference type="InterPro" id="IPR001750">
    <property type="entry name" value="ND/Mrp_TM"/>
</dbReference>
<dbReference type="PANTHER" id="PTHR46552">
    <property type="entry name" value="NADH-UBIQUINONE OXIDOREDUCTASE CHAIN 2"/>
    <property type="match status" value="1"/>
</dbReference>
<dbReference type="PANTHER" id="PTHR46552:SF1">
    <property type="entry name" value="NADH-UBIQUINONE OXIDOREDUCTASE CHAIN 2"/>
    <property type="match status" value="1"/>
</dbReference>
<dbReference type="Pfam" id="PF06444">
    <property type="entry name" value="NADH_dehy_S2_C"/>
    <property type="match status" value="1"/>
</dbReference>
<dbReference type="Pfam" id="PF00361">
    <property type="entry name" value="Proton_antipo_M"/>
    <property type="match status" value="1"/>
</dbReference>
<dbReference type="PRINTS" id="PR01436">
    <property type="entry name" value="NADHDHGNASE2"/>
</dbReference>
<comment type="function">
    <text evidence="1">Core subunit of the mitochondrial membrane respiratory chain NADH dehydrogenase (Complex I) that is believed to belong to the minimal assembly required for catalysis. Complex I functions in the transfer of electrons from NADH to the respiratory chain. The immediate electron acceptor for the enzyme is believed to be ubiquinone (By similarity).</text>
</comment>
<comment type="catalytic activity">
    <reaction>
        <text>a ubiquinone + NADH + 5 H(+)(in) = a ubiquinol + NAD(+) + 4 H(+)(out)</text>
        <dbReference type="Rhea" id="RHEA:29091"/>
        <dbReference type="Rhea" id="RHEA-COMP:9565"/>
        <dbReference type="Rhea" id="RHEA-COMP:9566"/>
        <dbReference type="ChEBI" id="CHEBI:15378"/>
        <dbReference type="ChEBI" id="CHEBI:16389"/>
        <dbReference type="ChEBI" id="CHEBI:17976"/>
        <dbReference type="ChEBI" id="CHEBI:57540"/>
        <dbReference type="ChEBI" id="CHEBI:57945"/>
        <dbReference type="EC" id="7.1.1.2"/>
    </reaction>
</comment>
<comment type="subcellular location">
    <subcellularLocation>
        <location>Mitochondrion inner membrane</location>
        <topology>Multi-pass membrane protein</topology>
    </subcellularLocation>
</comment>
<comment type="similarity">
    <text evidence="3">Belongs to the complex I subunit 2 family.</text>
</comment>
<protein>
    <recommendedName>
        <fullName>NADH-ubiquinone oxidoreductase chain 2</fullName>
        <ecNumber>7.1.1.2</ecNumber>
    </recommendedName>
    <alternativeName>
        <fullName>NADH dehydrogenase subunit 2</fullName>
    </alternativeName>
</protein>
<evidence type="ECO:0000250" key="1"/>
<evidence type="ECO:0000255" key="2"/>
<evidence type="ECO:0000305" key="3"/>
<reference key="1">
    <citation type="journal article" date="1990" name="Proc. Natl. Acad. Sci. U.S.A.">
        <title>Evolution of Drosophila mitochondrial DNA and the history of the melanogaster subgroup.</title>
        <authorList>
            <person name="Satta Y."/>
            <person name="Takahata N."/>
        </authorList>
    </citation>
    <scope>NUCLEOTIDE SEQUENCE [GENOMIC DNA]</scope>
</reference>
<sequence>STVLLFSSILLMLKNNLNNEINESFTSMIIMSALLLKSGAAPFHFWFPNMMEGLTWMNALMLMTWQKIAPLMLISYLNIKYLLLISVILSVIIGAIGGLNQTSLRKLMAFSSINHLGWMLSSLMFSESIWLIYFFFYSFLSFVLTFMFNIFKLFHLNQLFSWFVNSKILKFTLFMNFLSLGGLPPFLGFLPKWLVIQQLTLCNQYFLLTLMMMSTLITLFFYLRICYSAFMMNYFENNWIMKMNMISNNTNMYLIMTFFSIFGLFMISLFYFMF</sequence>
<name>NU2M_DROSI</name>
<organism>
    <name type="scientific">Drosophila simulans</name>
    <name type="common">Fruit fly</name>
    <dbReference type="NCBI Taxonomy" id="7240"/>
    <lineage>
        <taxon>Eukaryota</taxon>
        <taxon>Metazoa</taxon>
        <taxon>Ecdysozoa</taxon>
        <taxon>Arthropoda</taxon>
        <taxon>Hexapoda</taxon>
        <taxon>Insecta</taxon>
        <taxon>Pterygota</taxon>
        <taxon>Neoptera</taxon>
        <taxon>Endopterygota</taxon>
        <taxon>Diptera</taxon>
        <taxon>Brachycera</taxon>
        <taxon>Muscomorpha</taxon>
        <taxon>Ephydroidea</taxon>
        <taxon>Drosophilidae</taxon>
        <taxon>Drosophila</taxon>
        <taxon>Sophophora</taxon>
    </lineage>
</organism>